<gene>
    <name evidence="1" type="primary">rpl6</name>
    <name type="ordered locus">MmarC6_1258</name>
</gene>
<proteinExistence type="inferred from homology"/>
<dbReference type="EMBL" id="CP000867">
    <property type="protein sequence ID" value="ABX02071.1"/>
    <property type="molecule type" value="Genomic_DNA"/>
</dbReference>
<dbReference type="SMR" id="A9A9P8"/>
<dbReference type="STRING" id="444158.MmarC6_1258"/>
<dbReference type="KEGG" id="mmx:MmarC6_1258"/>
<dbReference type="eggNOG" id="arCOG04090">
    <property type="taxonomic scope" value="Archaea"/>
</dbReference>
<dbReference type="HOGENOM" id="CLU_065464_0_0_2"/>
<dbReference type="OrthoDB" id="7144at2157"/>
<dbReference type="PhylomeDB" id="A9A9P8"/>
<dbReference type="GO" id="GO:0022625">
    <property type="term" value="C:cytosolic large ribosomal subunit"/>
    <property type="evidence" value="ECO:0007669"/>
    <property type="project" value="TreeGrafter"/>
</dbReference>
<dbReference type="GO" id="GO:0019843">
    <property type="term" value="F:rRNA binding"/>
    <property type="evidence" value="ECO:0007669"/>
    <property type="project" value="UniProtKB-UniRule"/>
</dbReference>
<dbReference type="GO" id="GO:0003735">
    <property type="term" value="F:structural constituent of ribosome"/>
    <property type="evidence" value="ECO:0007669"/>
    <property type="project" value="InterPro"/>
</dbReference>
<dbReference type="GO" id="GO:0002181">
    <property type="term" value="P:cytoplasmic translation"/>
    <property type="evidence" value="ECO:0007669"/>
    <property type="project" value="TreeGrafter"/>
</dbReference>
<dbReference type="FunFam" id="3.90.930.12:FF:000008">
    <property type="entry name" value="50S ribosomal protein L6"/>
    <property type="match status" value="1"/>
</dbReference>
<dbReference type="Gene3D" id="3.90.930.12">
    <property type="entry name" value="Ribosomal protein L6, alpha-beta domain"/>
    <property type="match status" value="2"/>
</dbReference>
<dbReference type="HAMAP" id="MF_01365_A">
    <property type="entry name" value="Ribosomal_uL6_A"/>
    <property type="match status" value="1"/>
</dbReference>
<dbReference type="InterPro" id="IPR000702">
    <property type="entry name" value="Ribosomal_uL6-like"/>
</dbReference>
<dbReference type="InterPro" id="IPR036789">
    <property type="entry name" value="Ribosomal_uL6-like_a/b-dom_sf"/>
</dbReference>
<dbReference type="InterPro" id="IPR020040">
    <property type="entry name" value="Ribosomal_uL6_a/b-dom"/>
</dbReference>
<dbReference type="InterPro" id="IPR019907">
    <property type="entry name" value="Ribosomal_uL6_arc"/>
</dbReference>
<dbReference type="InterPro" id="IPR002359">
    <property type="entry name" value="Ribosomal_uL6_CS2"/>
</dbReference>
<dbReference type="NCBIfam" id="NF004037">
    <property type="entry name" value="PRK05518.1"/>
    <property type="match status" value="1"/>
</dbReference>
<dbReference type="NCBIfam" id="TIGR03653">
    <property type="entry name" value="uL6_arch"/>
    <property type="match status" value="1"/>
</dbReference>
<dbReference type="PANTHER" id="PTHR11655:SF16">
    <property type="entry name" value="60S RIBOSOMAL PROTEIN L9"/>
    <property type="match status" value="1"/>
</dbReference>
<dbReference type="PANTHER" id="PTHR11655">
    <property type="entry name" value="60S/50S RIBOSOMAL PROTEIN L6/L9"/>
    <property type="match status" value="1"/>
</dbReference>
<dbReference type="Pfam" id="PF00347">
    <property type="entry name" value="Ribosomal_L6"/>
    <property type="match status" value="2"/>
</dbReference>
<dbReference type="PIRSF" id="PIRSF002162">
    <property type="entry name" value="Ribosomal_L6"/>
    <property type="match status" value="1"/>
</dbReference>
<dbReference type="SUPFAM" id="SSF56053">
    <property type="entry name" value="Ribosomal protein L6"/>
    <property type="match status" value="2"/>
</dbReference>
<dbReference type="PROSITE" id="PS00700">
    <property type="entry name" value="RIBOSOMAL_L6_2"/>
    <property type="match status" value="1"/>
</dbReference>
<protein>
    <recommendedName>
        <fullName evidence="1">Large ribosomal subunit protein uL6</fullName>
    </recommendedName>
    <alternativeName>
        <fullName evidence="2">50S ribosomal protein L6</fullName>
    </alternativeName>
</protein>
<sequence length="182" mass="19964">MPVAALIREEIEIPANVNVEINGNTVAVKSGAKELKRDLLYPGIEISTEDGKVVIECTFPRKAQTAIVGTYRSHIQNMIKGVTDGFEYKLVIRYAHFPMKVSAKGNTVMIDNFLGEKYTRTAKIMDGVTVKVSGEEVIVSGANKEFVGQTAANIEQATKVKGRDTRIFQDGIYIVEKAGKVL</sequence>
<feature type="chain" id="PRO_1000144014" description="Large ribosomal subunit protein uL6">
    <location>
        <begin position="1"/>
        <end position="182"/>
    </location>
</feature>
<reference key="1">
    <citation type="submission" date="2007-10" db="EMBL/GenBank/DDBJ databases">
        <title>Complete sequence of Methanococcus maripaludis C6.</title>
        <authorList>
            <consortium name="US DOE Joint Genome Institute"/>
            <person name="Copeland A."/>
            <person name="Lucas S."/>
            <person name="Lapidus A."/>
            <person name="Barry K."/>
            <person name="Glavina del Rio T."/>
            <person name="Dalin E."/>
            <person name="Tice H."/>
            <person name="Pitluck S."/>
            <person name="Clum A."/>
            <person name="Schmutz J."/>
            <person name="Larimer F."/>
            <person name="Land M."/>
            <person name="Hauser L."/>
            <person name="Kyrpides N."/>
            <person name="Mikhailova N."/>
            <person name="Sieprawska-Lupa M."/>
            <person name="Whitman W.B."/>
            <person name="Richardson P."/>
        </authorList>
    </citation>
    <scope>NUCLEOTIDE SEQUENCE [LARGE SCALE GENOMIC DNA]</scope>
    <source>
        <strain>C6 / ATCC BAA-1332</strain>
    </source>
</reference>
<keyword id="KW-0687">Ribonucleoprotein</keyword>
<keyword id="KW-0689">Ribosomal protein</keyword>
<keyword id="KW-0694">RNA-binding</keyword>
<keyword id="KW-0699">rRNA-binding</keyword>
<organism>
    <name type="scientific">Methanococcus maripaludis (strain C6 / ATCC BAA-1332)</name>
    <dbReference type="NCBI Taxonomy" id="444158"/>
    <lineage>
        <taxon>Archaea</taxon>
        <taxon>Methanobacteriati</taxon>
        <taxon>Methanobacteriota</taxon>
        <taxon>Methanomada group</taxon>
        <taxon>Methanococci</taxon>
        <taxon>Methanococcales</taxon>
        <taxon>Methanococcaceae</taxon>
        <taxon>Methanococcus</taxon>
    </lineage>
</organism>
<comment type="function">
    <text evidence="1">This protein binds to the 23S rRNA, and is important in its secondary structure. It is located near the subunit interface in the base of the L7/L12 stalk, and near the tRNA binding site of the peptidyltransferase center.</text>
</comment>
<comment type="subunit">
    <text evidence="1">Part of the 50S ribosomal subunit.</text>
</comment>
<comment type="similarity">
    <text evidence="1">Belongs to the universal ribosomal protein uL6 family.</text>
</comment>
<evidence type="ECO:0000255" key="1">
    <source>
        <dbReference type="HAMAP-Rule" id="MF_01365"/>
    </source>
</evidence>
<evidence type="ECO:0000305" key="2"/>
<name>RL6_METM6</name>
<accession>A9A9P8</accession>